<reference key="1">
    <citation type="submission" date="2006-09" db="EMBL/GenBank/DDBJ databases">
        <title>NISC comparative sequencing initiative.</title>
        <authorList>
            <person name="Antonellis A."/>
            <person name="Ayele K."/>
            <person name="Benjamin B."/>
            <person name="Blakesley R.W."/>
            <person name="Boakye A."/>
            <person name="Bouffard G.G."/>
            <person name="Brinkley C."/>
            <person name="Brooks S."/>
            <person name="Chu G."/>
            <person name="Coleman H."/>
            <person name="Engle J."/>
            <person name="Gestole M."/>
            <person name="Greene A."/>
            <person name="Guan X."/>
            <person name="Gupta J."/>
            <person name="Haghighi P."/>
            <person name="Han J."/>
            <person name="Hansen N."/>
            <person name="Ho S.-L."/>
            <person name="Hu P."/>
            <person name="Hunter G."/>
            <person name="Hurle B."/>
            <person name="Idol J.R."/>
            <person name="Kwong P."/>
            <person name="Laric P."/>
            <person name="Larson S."/>
            <person name="Lee-Lin S.-Q."/>
            <person name="Legaspi R."/>
            <person name="Madden M."/>
            <person name="Maduro Q.L."/>
            <person name="Maduro V.B."/>
            <person name="Margulies E.H."/>
            <person name="Masiello C."/>
            <person name="Maskeri B."/>
            <person name="McDowell J."/>
            <person name="Mojidi H.A."/>
            <person name="Mullikin J.C."/>
            <person name="Oestreicher J.S."/>
            <person name="Park M."/>
            <person name="Portnoy M.E."/>
            <person name="Prasad A."/>
            <person name="Puri O."/>
            <person name="Reddix-Dugue N."/>
            <person name="Schandler K."/>
            <person name="Schueler M.G."/>
            <person name="Sison C."/>
            <person name="Stantripop S."/>
            <person name="Stephen E."/>
            <person name="Taye A."/>
            <person name="Thomas J.W."/>
            <person name="Thomas P.J."/>
            <person name="Tsipouri V."/>
            <person name="Ung L."/>
            <person name="Vogt J.L."/>
            <person name="Wetherby K.D."/>
            <person name="Young A."/>
            <person name="Green E.D."/>
        </authorList>
    </citation>
    <scope>NUCLEOTIDE SEQUENCE [LARGE SCALE GENOMIC DNA]</scope>
</reference>
<proteinExistence type="inferred from homology"/>
<feature type="chain" id="PRO_0000260775" description="Cystic fibrosis transmembrane conductance regulator">
    <location>
        <begin position="1"/>
        <end position="1480"/>
    </location>
</feature>
<feature type="topological domain" description="Cytoplasmic" evidence="1">
    <location>
        <begin position="1"/>
        <end position="77"/>
    </location>
</feature>
<feature type="transmembrane region" description="Helical; Name=1" evidence="1">
    <location>
        <begin position="78"/>
        <end position="98"/>
    </location>
</feature>
<feature type="topological domain" description="Extracellular" evidence="1">
    <location>
        <begin position="99"/>
        <end position="122"/>
    </location>
</feature>
<feature type="transmembrane region" description="Helical; Name=2" evidence="1">
    <location>
        <begin position="123"/>
        <end position="146"/>
    </location>
</feature>
<feature type="topological domain" description="Cytoplasmic" evidence="1">
    <location>
        <begin position="147"/>
        <end position="195"/>
    </location>
</feature>
<feature type="transmembrane region" description="Helical; Name=3" evidence="1">
    <location>
        <begin position="196"/>
        <end position="216"/>
    </location>
</feature>
<feature type="topological domain" description="Extracellular" evidence="1">
    <location>
        <begin position="217"/>
        <end position="222"/>
    </location>
</feature>
<feature type="transmembrane region" description="Helical; Name=4" evidence="1">
    <location>
        <begin position="223"/>
        <end position="243"/>
    </location>
</feature>
<feature type="topological domain" description="Cytoplasmic" evidence="1">
    <location>
        <begin position="244"/>
        <end position="298"/>
    </location>
</feature>
<feature type="transmembrane region" description="Helical; Name=5" evidence="1">
    <location>
        <begin position="299"/>
        <end position="319"/>
    </location>
</feature>
<feature type="topological domain" description="Extracellular" evidence="1">
    <location>
        <begin position="320"/>
        <end position="339"/>
    </location>
</feature>
<feature type="transmembrane region" description="Helical; Name=6" evidence="1">
    <location>
        <begin position="340"/>
        <end position="358"/>
    </location>
</feature>
<feature type="topological domain" description="Cytoplasmic" evidence="1">
    <location>
        <begin position="359"/>
        <end position="858"/>
    </location>
</feature>
<feature type="transmembrane region" description="Helical; Name=7" evidence="1">
    <location>
        <begin position="859"/>
        <end position="879"/>
    </location>
</feature>
<feature type="topological domain" description="Extracellular" evidence="1">
    <location>
        <begin position="880"/>
        <end position="918"/>
    </location>
</feature>
<feature type="transmembrane region" description="Discontinuously helical; Name=8" evidence="1">
    <location>
        <begin position="919"/>
        <end position="939"/>
    </location>
</feature>
<feature type="topological domain" description="Cytoplasmic" evidence="1">
    <location>
        <begin position="940"/>
        <end position="990"/>
    </location>
</feature>
<feature type="transmembrane region" description="Helical; Name=9" evidence="1">
    <location>
        <begin position="991"/>
        <end position="1011"/>
    </location>
</feature>
<feature type="topological domain" description="Extracellular" evidence="1">
    <location>
        <begin position="1012"/>
        <end position="1013"/>
    </location>
</feature>
<feature type="transmembrane region" description="Helical; Name=10" evidence="1">
    <location>
        <begin position="1014"/>
        <end position="1034"/>
    </location>
</feature>
<feature type="topological domain" description="Cytoplasmic" evidence="1">
    <location>
        <begin position="1035"/>
        <end position="1095"/>
    </location>
</feature>
<feature type="transmembrane region" description="Helical; Name=11" evidence="1">
    <location>
        <begin position="1096"/>
        <end position="1116"/>
    </location>
</feature>
<feature type="topological domain" description="Extracellular" evidence="1">
    <location>
        <begin position="1117"/>
        <end position="1130"/>
    </location>
</feature>
<feature type="transmembrane region" description="Helical; Name=12" evidence="1">
    <location>
        <begin position="1131"/>
        <end position="1151"/>
    </location>
</feature>
<feature type="topological domain" description="Cytoplasmic" evidence="1">
    <location>
        <begin position="1152"/>
        <end position="1480"/>
    </location>
</feature>
<feature type="domain" description="ABC transmembrane type-1 1" evidence="6">
    <location>
        <begin position="81"/>
        <end position="365"/>
    </location>
</feature>
<feature type="domain" description="ABC transporter 1" evidence="5">
    <location>
        <begin position="423"/>
        <end position="646"/>
    </location>
</feature>
<feature type="domain" description="ABC transmembrane type-1 2" evidence="6">
    <location>
        <begin position="859"/>
        <end position="1155"/>
    </location>
</feature>
<feature type="domain" description="ABC transporter 2" evidence="5">
    <location>
        <begin position="1210"/>
        <end position="1443"/>
    </location>
</feature>
<feature type="region of interest" description="Disordered R region" evidence="1">
    <location>
        <begin position="654"/>
        <end position="831"/>
    </location>
</feature>
<feature type="region of interest" description="Interaction with GORASP2" evidence="1">
    <location>
        <begin position="1386"/>
        <end position="1480"/>
    </location>
</feature>
<feature type="region of interest" description="Disordered" evidence="7">
    <location>
        <begin position="1451"/>
        <end position="1480"/>
    </location>
</feature>
<feature type="short sequence motif" description="PDZ-binding" evidence="1">
    <location>
        <begin position="1478"/>
        <end position="1480"/>
    </location>
</feature>
<feature type="compositionally biased region" description="Acidic residues" evidence="7">
    <location>
        <begin position="1470"/>
        <end position="1480"/>
    </location>
</feature>
<feature type="binding site" evidence="1">
    <location>
        <position position="401"/>
    </location>
    <ligand>
        <name>ATP</name>
        <dbReference type="ChEBI" id="CHEBI:30616"/>
        <label>1</label>
    </ligand>
</feature>
<feature type="binding site" evidence="1">
    <location>
        <position position="434"/>
    </location>
    <ligand>
        <name>ATP</name>
        <dbReference type="ChEBI" id="CHEBI:30616"/>
        <label>1</label>
    </ligand>
</feature>
<feature type="binding site" evidence="5">
    <location>
        <begin position="458"/>
        <end position="465"/>
    </location>
    <ligand>
        <name>ATP</name>
        <dbReference type="ChEBI" id="CHEBI:30616"/>
        <label>1</label>
    </ligand>
</feature>
<feature type="binding site" evidence="2">
    <location>
        <position position="493"/>
    </location>
    <ligand>
        <name>ATP</name>
        <dbReference type="ChEBI" id="CHEBI:30616"/>
        <label>1</label>
    </ligand>
</feature>
<feature type="binding site" evidence="1">
    <location>
        <position position="1219"/>
    </location>
    <ligand>
        <name>ATP</name>
        <dbReference type="ChEBI" id="CHEBI:30616"/>
        <label>2</label>
    </ligand>
</feature>
<feature type="binding site" evidence="5">
    <location>
        <begin position="1244"/>
        <end position="1251"/>
    </location>
    <ligand>
        <name>ATP</name>
        <dbReference type="ChEBI" id="CHEBI:30616"/>
        <label>2</label>
    </ligand>
</feature>
<feature type="modified residue" description="Phosphoserine" evidence="1">
    <location>
        <position position="549"/>
    </location>
</feature>
<feature type="modified residue" description="Phosphoserine" evidence="1">
    <location>
        <position position="660"/>
    </location>
</feature>
<feature type="modified residue" description="Phosphoserine; by PKA" evidence="1">
    <location>
        <position position="670"/>
    </location>
</feature>
<feature type="modified residue" description="Phosphoserine" evidence="1">
    <location>
        <position position="686"/>
    </location>
</feature>
<feature type="modified residue" description="Phosphoserine" evidence="1">
    <location>
        <position position="700"/>
    </location>
</feature>
<feature type="modified residue" description="Phosphoserine" evidence="1">
    <location>
        <position position="712"/>
    </location>
</feature>
<feature type="modified residue" description="Phosphothreonine" evidence="1">
    <location>
        <position position="717"/>
    </location>
</feature>
<feature type="modified residue" description="Phosphoserine" evidence="1">
    <location>
        <position position="737"/>
    </location>
</feature>
<feature type="modified residue" description="Phosphoserine" evidence="1">
    <location>
        <position position="753"/>
    </location>
</feature>
<feature type="modified residue" description="Phosphoserine" evidence="1">
    <location>
        <position position="768"/>
    </location>
</feature>
<feature type="modified residue" description="Phosphoserine" evidence="1">
    <location>
        <position position="790"/>
    </location>
</feature>
<feature type="modified residue" description="Phosphoserine" evidence="1">
    <location>
        <position position="795"/>
    </location>
</feature>
<feature type="modified residue" description="Phosphoserine" evidence="1">
    <location>
        <position position="813"/>
    </location>
</feature>
<feature type="modified residue" description="Phosphoserine" evidence="1">
    <location>
        <position position="1444"/>
    </location>
</feature>
<feature type="modified residue" description="Phosphoserine" evidence="1">
    <location>
        <position position="1456"/>
    </location>
</feature>
<feature type="lipid moiety-binding region" description="S-palmitoyl cysteine" evidence="1">
    <location>
        <position position="524"/>
    </location>
</feature>
<feature type="lipid moiety-binding region" description="S-palmitoyl cysteine" evidence="1">
    <location>
        <position position="1395"/>
    </location>
</feature>
<feature type="glycosylation site" description="N-linked (GlcNAc...) asparagine" evidence="4">
    <location>
        <position position="894"/>
    </location>
</feature>
<feature type="glycosylation site" description="N-linked (GlcNAc...) asparagine" evidence="4">
    <location>
        <position position="900"/>
    </location>
</feature>
<feature type="cross-link" description="Glycyl lysine isopeptide (Lys-Gly) (interchain with G-Cter in ubiquitin)" evidence="1">
    <location>
        <position position="688"/>
    </location>
</feature>
<organism>
    <name type="scientific">Nomascus leucogenys</name>
    <name type="common">Northern white-cheeked gibbon</name>
    <name type="synonym">Hylobates leucogenys</name>
    <dbReference type="NCBI Taxonomy" id="61853"/>
    <lineage>
        <taxon>Eukaryota</taxon>
        <taxon>Metazoa</taxon>
        <taxon>Chordata</taxon>
        <taxon>Craniata</taxon>
        <taxon>Vertebrata</taxon>
        <taxon>Euteleostomi</taxon>
        <taxon>Mammalia</taxon>
        <taxon>Eutheria</taxon>
        <taxon>Euarchontoglires</taxon>
        <taxon>Primates</taxon>
        <taxon>Haplorrhini</taxon>
        <taxon>Catarrhini</taxon>
        <taxon>Hylobatidae</taxon>
        <taxon>Nomascus</taxon>
    </lineage>
</organism>
<evidence type="ECO:0000250" key="1">
    <source>
        <dbReference type="UniProtKB" id="P13569"/>
    </source>
</evidence>
<evidence type="ECO:0000250" key="2">
    <source>
        <dbReference type="UniProtKB" id="P26361"/>
    </source>
</evidence>
<evidence type="ECO:0000250" key="3">
    <source>
        <dbReference type="UniProtKB" id="P34158"/>
    </source>
</evidence>
<evidence type="ECO:0000255" key="4"/>
<evidence type="ECO:0000255" key="5">
    <source>
        <dbReference type="PROSITE-ProRule" id="PRU00434"/>
    </source>
</evidence>
<evidence type="ECO:0000255" key="6">
    <source>
        <dbReference type="PROSITE-ProRule" id="PRU00441"/>
    </source>
</evidence>
<evidence type="ECO:0000256" key="7">
    <source>
        <dbReference type="SAM" id="MobiDB-lite"/>
    </source>
</evidence>
<evidence type="ECO:0000305" key="8"/>
<keyword id="KW-0067">ATP-binding</keyword>
<keyword id="KW-1003">Cell membrane</keyword>
<keyword id="KW-0868">Chloride</keyword>
<keyword id="KW-0869">Chloride channel</keyword>
<keyword id="KW-0256">Endoplasmic reticulum</keyword>
<keyword id="KW-0967">Endosome</keyword>
<keyword id="KW-0325">Glycoprotein</keyword>
<keyword id="KW-0407">Ion channel</keyword>
<keyword id="KW-0406">Ion transport</keyword>
<keyword id="KW-0413">Isomerase</keyword>
<keyword id="KW-1017">Isopeptide bond</keyword>
<keyword id="KW-0449">Lipoprotein</keyword>
<keyword id="KW-0472">Membrane</keyword>
<keyword id="KW-0547">Nucleotide-binding</keyword>
<keyword id="KW-0539">Nucleus</keyword>
<keyword id="KW-0564">Palmitate</keyword>
<keyword id="KW-0597">Phosphoprotein</keyword>
<keyword id="KW-1185">Reference proteome</keyword>
<keyword id="KW-0677">Repeat</keyword>
<keyword id="KW-0812">Transmembrane</keyword>
<keyword id="KW-1133">Transmembrane helix</keyword>
<keyword id="KW-0813">Transport</keyword>
<keyword id="KW-0832">Ubl conjugation</keyword>
<gene>
    <name evidence="1" type="primary">CFTR</name>
    <name type="synonym">ABCC7</name>
</gene>
<sequence length="1480" mass="168068">MQRSPLEKASVVSKLFFSWTRPILRKGYRQRLELSDIYQIPSADSADNLSEKLEREWDRELASKKNPKLINALRRCFFWRFMFYGIFLYLGEVTKAVQPLLLGRIIASYDPDNKEERSIAIYLGIGLCLLFIVRTLLLHPAIFGLHHIGMQMRIAMFSLIYKKTLKLSSRVLDKISIGQLVSLLSNNLNKFDEGLALAHFVWIAPLQVALLMGLIWELLQASAFCGLGFLIVLALFQAGLGRMMMKYRDQRAGKISERLVITSEMIENIQSVKAYCWEEAMEKMIENLRQTELKLTRKAAYVRYFNSSAFFFSGFFVVFLSVLPYALIKGIVLRKIFTTISFCIVLRMAVTRQFPWAVQTWYDSLGAINKIQDFLQKQEYKTLEYNLTTTEVVMENVTAFWEEGFGELFEKAKQNNNNRKTSNGDDSLFFSNFSLLGTPVLKDINFKIERGQLLAVAGSTGAGKTSLLMMIMGELEPSEGKIKHSGRISFCSQFSWIMPGTIKENIIFGVSYDEYRYRSVIKACQLEEDISKFAEKDNIVLGEGGITLSGGQRARISLARAVYKDADLYLLDSPFGYLDVLTEKEIFESCICKLMANKTRILVTSKMEHLKKADKILILHEGSSYFYGTFSELQNLRPDFSSKLMGCDSFDQFSAERRNSILTETLRRFSLEGDAPVSWTETKKQSFKQTGEFGEKRKNSILNPINSIRKFSIVPKTPLQMNGIEEDSDEPLERRLSLVPDSEQGEAILPHISVISTGPTLQARRRQSVLNLMTHSINQGQSIHRKTTASTRKVSLAPQANLTELDIYSRRLSQETGLEISEEINEEDLKECFFDDMESIPAVTTWNTYLRYITVHKSLIFVLIWCLVIFLAEVAASLVVLWLLGNTPLQDKGNSTHSRNNSYAVIITSTSSYYVFYIYVGVADTLLAMGFFRGLPLVHTLITVSKILHHKMLHSVLQAPMSTLNTLKAGGILNRFSKDIAILDDLLPLTIFDFIQLLLIVIGAIAVVAVLQPYIFVATVPVIVAFIMLRAYFLQTSQQLKQLESEGRSPIFTHLVTSLKGLWTLRAFGRQPYFETLFHKALNLHTANWFLYLSTLRWFQMRIEMIFVMFFIAVTFISILTTGEGEGRIGIILTLAMNIMSTLQWAVNSSIDVDSLMRSVSRVFKFIDMPTEGKPTKSTKPYKNGQLSKVMIIENSHVKKDDIWPSGGQMTVKDLSAKYTEGGNAILENISFSISPGQRVGLLGRTGSGKSTLLSALLRLLNTEGEIQIDGVSWDSITLQQWRKAFGVIPQKVFIFSGTFRKNLDPYEQWSDQEIWKVADEVGLRSVIEQFPGKLDFVLVDGGCVLSHGHKQLMCLARSVLSKAKILLLDEPSAHLDPVTYQIIRRTLKQAFADCTVILCEHRIEAMLECQQFLVIEENKVRQYDSIQKLLNERSLFRQAISPSDRVKLFPHRNSSKGKSQPQIAALKEETEEEVQDTRL</sequence>
<protein>
    <recommendedName>
        <fullName evidence="1">Cystic fibrosis transmembrane conductance regulator</fullName>
        <shortName>CFTR</shortName>
    </recommendedName>
    <alternativeName>
        <fullName>ATP-binding cassette sub-family C member 7</fullName>
    </alternativeName>
    <alternativeName>
        <fullName>Channel conductance-controlling ATPase</fullName>
        <ecNumber evidence="1">5.6.1.6</ecNumber>
    </alternativeName>
    <alternativeName>
        <fullName>cAMP-dependent chloride channel</fullName>
    </alternativeName>
</protein>
<dbReference type="EC" id="5.6.1.6" evidence="1"/>
<dbReference type="EMBL" id="DP000194">
    <property type="protein sequence ID" value="ABJ08867.1"/>
    <property type="molecule type" value="Genomic_DNA"/>
</dbReference>
<dbReference type="RefSeq" id="XP_003261288.2">
    <property type="nucleotide sequence ID" value="XM_003261240.2"/>
</dbReference>
<dbReference type="BMRB" id="Q07DX5"/>
<dbReference type="SMR" id="Q07DX5"/>
<dbReference type="FunCoup" id="Q07DX5">
    <property type="interactions" value="511"/>
</dbReference>
<dbReference type="STRING" id="61853.ENSNLEP00000014239"/>
<dbReference type="GlyCosmos" id="Q07DX5">
    <property type="glycosylation" value="2 sites, No reported glycans"/>
</dbReference>
<dbReference type="GeneID" id="100601480"/>
<dbReference type="eggNOG" id="KOG0054">
    <property type="taxonomic scope" value="Eukaryota"/>
</dbReference>
<dbReference type="InParanoid" id="Q07DX5"/>
<dbReference type="OrthoDB" id="6500128at2759"/>
<dbReference type="Proteomes" id="UP000001073">
    <property type="component" value="Unplaced"/>
</dbReference>
<dbReference type="GO" id="GO:0016324">
    <property type="term" value="C:apical plasma membrane"/>
    <property type="evidence" value="ECO:0000250"/>
    <property type="project" value="UniProtKB"/>
</dbReference>
<dbReference type="GO" id="GO:0034707">
    <property type="term" value="C:chloride channel complex"/>
    <property type="evidence" value="ECO:0007669"/>
    <property type="project" value="UniProtKB-KW"/>
</dbReference>
<dbReference type="GO" id="GO:0005829">
    <property type="term" value="C:cytosol"/>
    <property type="evidence" value="ECO:0007669"/>
    <property type="project" value="TreeGrafter"/>
</dbReference>
<dbReference type="GO" id="GO:0005769">
    <property type="term" value="C:early endosome"/>
    <property type="evidence" value="ECO:0000250"/>
    <property type="project" value="UniProtKB"/>
</dbReference>
<dbReference type="GO" id="GO:0031901">
    <property type="term" value="C:early endosome membrane"/>
    <property type="evidence" value="ECO:0007669"/>
    <property type="project" value="UniProtKB-SubCell"/>
</dbReference>
<dbReference type="GO" id="GO:0005789">
    <property type="term" value="C:endoplasmic reticulum membrane"/>
    <property type="evidence" value="ECO:0000250"/>
    <property type="project" value="UniProtKB"/>
</dbReference>
<dbReference type="GO" id="GO:0016020">
    <property type="term" value="C:membrane"/>
    <property type="evidence" value="ECO:0000250"/>
    <property type="project" value="UniProtKB"/>
</dbReference>
<dbReference type="GO" id="GO:0005634">
    <property type="term" value="C:nucleus"/>
    <property type="evidence" value="ECO:0000250"/>
    <property type="project" value="UniProtKB"/>
</dbReference>
<dbReference type="GO" id="GO:0005886">
    <property type="term" value="C:plasma membrane"/>
    <property type="evidence" value="ECO:0000250"/>
    <property type="project" value="UniProtKB"/>
</dbReference>
<dbReference type="GO" id="GO:0055038">
    <property type="term" value="C:recycling endosome membrane"/>
    <property type="evidence" value="ECO:0007669"/>
    <property type="project" value="UniProtKB-SubCell"/>
</dbReference>
<dbReference type="GO" id="GO:0140359">
    <property type="term" value="F:ABC-type transporter activity"/>
    <property type="evidence" value="ECO:0007669"/>
    <property type="project" value="InterPro"/>
</dbReference>
<dbReference type="GO" id="GO:0005524">
    <property type="term" value="F:ATP binding"/>
    <property type="evidence" value="ECO:0007669"/>
    <property type="project" value="UniProtKB-KW"/>
</dbReference>
<dbReference type="GO" id="GO:0016887">
    <property type="term" value="F:ATP hydrolysis activity"/>
    <property type="evidence" value="ECO:0000250"/>
    <property type="project" value="UniProtKB"/>
</dbReference>
<dbReference type="GO" id="GO:0015106">
    <property type="term" value="F:bicarbonate transmembrane transporter activity"/>
    <property type="evidence" value="ECO:0000250"/>
    <property type="project" value="UniProtKB"/>
</dbReference>
<dbReference type="GO" id="GO:0005254">
    <property type="term" value="F:chloride channel activity"/>
    <property type="evidence" value="ECO:0000250"/>
    <property type="project" value="UniProtKB"/>
</dbReference>
<dbReference type="GO" id="GO:0019869">
    <property type="term" value="F:chloride channel inhibitor activity"/>
    <property type="evidence" value="ECO:0000250"/>
    <property type="project" value="UniProtKB"/>
</dbReference>
<dbReference type="GO" id="GO:0015108">
    <property type="term" value="F:chloride transmembrane transporter activity"/>
    <property type="evidence" value="ECO:0000250"/>
    <property type="project" value="UniProtKB"/>
</dbReference>
<dbReference type="GO" id="GO:0005260">
    <property type="term" value="F:intracellularly ATP-gated chloride channel activity"/>
    <property type="evidence" value="ECO:0000250"/>
    <property type="project" value="UniProtKB"/>
</dbReference>
<dbReference type="GO" id="GO:0015701">
    <property type="term" value="P:bicarbonate transport"/>
    <property type="evidence" value="ECO:0000250"/>
    <property type="project" value="UniProtKB"/>
</dbReference>
<dbReference type="GO" id="GO:0071320">
    <property type="term" value="P:cellular response to cAMP"/>
    <property type="evidence" value="ECO:0000250"/>
    <property type="project" value="UniProtKB"/>
</dbReference>
<dbReference type="GO" id="GO:1904322">
    <property type="term" value="P:cellular response to forskolin"/>
    <property type="evidence" value="ECO:0000250"/>
    <property type="project" value="UniProtKB"/>
</dbReference>
<dbReference type="GO" id="GO:1902476">
    <property type="term" value="P:chloride transmembrane transport"/>
    <property type="evidence" value="ECO:0000250"/>
    <property type="project" value="UniProtKB"/>
</dbReference>
<dbReference type="GO" id="GO:0051454">
    <property type="term" value="P:intracellular pH elevation"/>
    <property type="evidence" value="ECO:0000250"/>
    <property type="project" value="UniProtKB"/>
</dbReference>
<dbReference type="GO" id="GO:0060081">
    <property type="term" value="P:membrane hyperpolarization"/>
    <property type="evidence" value="ECO:0000250"/>
    <property type="project" value="UniProtKB"/>
</dbReference>
<dbReference type="GO" id="GO:0050891">
    <property type="term" value="P:multicellular organismal-level water homeostasis"/>
    <property type="evidence" value="ECO:0000250"/>
    <property type="project" value="UniProtKB"/>
</dbReference>
<dbReference type="GO" id="GO:0034976">
    <property type="term" value="P:response to endoplasmic reticulum stress"/>
    <property type="evidence" value="ECO:0000250"/>
    <property type="project" value="UniProtKB"/>
</dbReference>
<dbReference type="GO" id="GO:0048240">
    <property type="term" value="P:sperm capacitation"/>
    <property type="evidence" value="ECO:0000250"/>
    <property type="project" value="UniProtKB"/>
</dbReference>
<dbReference type="GO" id="GO:0035377">
    <property type="term" value="P:transepithelial water transport"/>
    <property type="evidence" value="ECO:0000250"/>
    <property type="project" value="UniProtKB"/>
</dbReference>
<dbReference type="CDD" id="cd18594">
    <property type="entry name" value="ABC_6TM_CFTR_D1"/>
    <property type="match status" value="1"/>
</dbReference>
<dbReference type="CDD" id="cd18600">
    <property type="entry name" value="ABC_6TM_CFTR_D2"/>
    <property type="match status" value="1"/>
</dbReference>
<dbReference type="CDD" id="cd03291">
    <property type="entry name" value="ABCC_CFTR1"/>
    <property type="match status" value="1"/>
</dbReference>
<dbReference type="CDD" id="cd03289">
    <property type="entry name" value="ABCC_CFTR2"/>
    <property type="match status" value="1"/>
</dbReference>
<dbReference type="FunFam" id="1.20.1560.10:FF:000017">
    <property type="entry name" value="Cystic fibrosis transmembrane conductance regulator"/>
    <property type="match status" value="1"/>
</dbReference>
<dbReference type="FunFam" id="1.20.1560.10:FF:000019">
    <property type="entry name" value="Cystic fibrosis transmembrane conductance regulator"/>
    <property type="match status" value="1"/>
</dbReference>
<dbReference type="FunFam" id="3.40.50.300:FF:000581">
    <property type="entry name" value="Cystic fibrosis transmembrane conductance regulator"/>
    <property type="match status" value="1"/>
</dbReference>
<dbReference type="FunFam" id="3.40.50.300:FF:000591">
    <property type="entry name" value="Cystic fibrosis transmembrane conductance regulator"/>
    <property type="match status" value="1"/>
</dbReference>
<dbReference type="Gene3D" id="1.20.1560.10">
    <property type="entry name" value="ABC transporter type 1, transmembrane domain"/>
    <property type="match status" value="2"/>
</dbReference>
<dbReference type="Gene3D" id="3.40.50.300">
    <property type="entry name" value="P-loop containing nucleotide triphosphate hydrolases"/>
    <property type="match status" value="2"/>
</dbReference>
<dbReference type="InterPro" id="IPR003593">
    <property type="entry name" value="AAA+_ATPase"/>
</dbReference>
<dbReference type="InterPro" id="IPR011527">
    <property type="entry name" value="ABC1_TM_dom"/>
</dbReference>
<dbReference type="InterPro" id="IPR036640">
    <property type="entry name" value="ABC1_TM_sf"/>
</dbReference>
<dbReference type="InterPro" id="IPR003439">
    <property type="entry name" value="ABC_transporter-like_ATP-bd"/>
</dbReference>
<dbReference type="InterPro" id="IPR017871">
    <property type="entry name" value="ABC_transporter-like_CS"/>
</dbReference>
<dbReference type="InterPro" id="IPR050173">
    <property type="entry name" value="ABC_transporter_C-like"/>
</dbReference>
<dbReference type="InterPro" id="IPR009147">
    <property type="entry name" value="CFTR/ABCC7"/>
</dbReference>
<dbReference type="InterPro" id="IPR047082">
    <property type="entry name" value="CFTR1_ATP-bd_dom1"/>
</dbReference>
<dbReference type="InterPro" id="IPR025837">
    <property type="entry name" value="CFTR_reg_dom"/>
</dbReference>
<dbReference type="InterPro" id="IPR027417">
    <property type="entry name" value="P-loop_NTPase"/>
</dbReference>
<dbReference type="NCBIfam" id="TIGR01271">
    <property type="entry name" value="CFTR_protein"/>
    <property type="match status" value="1"/>
</dbReference>
<dbReference type="PANTHER" id="PTHR24223">
    <property type="entry name" value="ATP-BINDING CASSETTE SUB-FAMILY C"/>
    <property type="match status" value="1"/>
</dbReference>
<dbReference type="PANTHER" id="PTHR24223:SF19">
    <property type="entry name" value="CYSTIC FIBROSIS TRANSMEMBRANE CONDUCTANCE REGULATOR"/>
    <property type="match status" value="1"/>
</dbReference>
<dbReference type="Pfam" id="PF00664">
    <property type="entry name" value="ABC_membrane"/>
    <property type="match status" value="2"/>
</dbReference>
<dbReference type="Pfam" id="PF00005">
    <property type="entry name" value="ABC_tran"/>
    <property type="match status" value="2"/>
</dbReference>
<dbReference type="Pfam" id="PF14396">
    <property type="entry name" value="CFTR_R"/>
    <property type="match status" value="1"/>
</dbReference>
<dbReference type="PRINTS" id="PR01851">
    <property type="entry name" value="CYSFIBREGLTR"/>
</dbReference>
<dbReference type="SMART" id="SM00382">
    <property type="entry name" value="AAA"/>
    <property type="match status" value="2"/>
</dbReference>
<dbReference type="SUPFAM" id="SSF90123">
    <property type="entry name" value="ABC transporter transmembrane region"/>
    <property type="match status" value="2"/>
</dbReference>
<dbReference type="SUPFAM" id="SSF52540">
    <property type="entry name" value="P-loop containing nucleoside triphosphate hydrolases"/>
    <property type="match status" value="2"/>
</dbReference>
<dbReference type="PROSITE" id="PS50929">
    <property type="entry name" value="ABC_TM1F"/>
    <property type="match status" value="2"/>
</dbReference>
<dbReference type="PROSITE" id="PS00211">
    <property type="entry name" value="ABC_TRANSPORTER_1"/>
    <property type="match status" value="1"/>
</dbReference>
<dbReference type="PROSITE" id="PS50893">
    <property type="entry name" value="ABC_TRANSPORTER_2"/>
    <property type="match status" value="2"/>
</dbReference>
<name>CFTR_NOMLE</name>
<comment type="function">
    <text evidence="1 2">Epithelial ion channel that plays an important role in the regulation of epithelial ion and water transport and fluid homeostasis. Mediates the transport of chloride ions across the cell membrane (By similarity). Possesses an intrinsic ATPase activity and utilizes ATP to gate its channel; the passive flow of anions through the channel is gated by cycles of ATP binding and hydrolysis by the ATP-binding domains (By similarity). The ion channel is also permeable to HCO(3)(-); selectivity depends on the extracellular chloride concentration. Exerts its function also by modulating the activity of other ion channels and transporters. Contributes to the regulation of the pH and the ion content of the epithelial fluid layer. Modulates the activity of the epithelial sodium channel (ENaC) complex, in part by regulating the cell surface expression of the ENaC complex. May regulate bicarbonate secretion and salvage in epithelial cells by regulating the transporter SLC4A7. Can inhibit the chloride channel activity of ANO1 (By similarity). Plays a role in the chloride and bicarbonate homeostasis during sperm epididymal maturation and capacitation (By similarity).</text>
</comment>
<comment type="catalytic activity">
    <reaction evidence="1">
        <text>ATP + H2O + closed Cl(-) channel = ADP + phosphate + open Cl(-) channel.</text>
        <dbReference type="EC" id="5.6.1.6"/>
    </reaction>
</comment>
<comment type="catalytic activity">
    <reaction evidence="1">
        <text>chloride(in) = chloride(out)</text>
        <dbReference type="Rhea" id="RHEA:29823"/>
        <dbReference type="ChEBI" id="CHEBI:17996"/>
    </reaction>
</comment>
<comment type="catalytic activity">
    <reaction evidence="1">
        <text>hydrogencarbonate(in) = hydrogencarbonate(out)</text>
        <dbReference type="Rhea" id="RHEA:28695"/>
        <dbReference type="ChEBI" id="CHEBI:17544"/>
    </reaction>
</comment>
<comment type="catalytic activity">
    <reaction evidence="1">
        <text>ATP + H2O = ADP + phosphate + H(+)</text>
        <dbReference type="Rhea" id="RHEA:13065"/>
        <dbReference type="ChEBI" id="CHEBI:15377"/>
        <dbReference type="ChEBI" id="CHEBI:15378"/>
        <dbReference type="ChEBI" id="CHEBI:30616"/>
        <dbReference type="ChEBI" id="CHEBI:43474"/>
        <dbReference type="ChEBI" id="CHEBI:456216"/>
    </reaction>
    <physiologicalReaction direction="left-to-right" evidence="1">
        <dbReference type="Rhea" id="RHEA:13066"/>
    </physiologicalReaction>
</comment>
<comment type="subunit">
    <text evidence="1 2 3">Monomer; does not require oligomerization for channel activity. May form oligomers in the membrane (By similarity). Interacts with SLC26A3, SLC26A6 and NHERF1 (By similarity). Interacts with SHANK2 (By similarity). Interacts with MYO6 (By similarity). Interacts (via C-terminus) with GOPC (via PDZ domain); this promotes CFTR internalization and thereby decreases channel activity. Interacts with SLC4A7 through NHERF1. Found in a complex with MYO5B and RAB11A. Interacts with ANO1. Interacts with SLC26A8 (By similarity). Interacts with AHCYL1; the interaction increases CFTR activity (By similarity). Interacts with CSE1L (By similarity). The core-glycosylated form interacts with GORASP2 (via PDZ GRASP-type 1 domain) in respone to ER stress (By similarity). Interacts with MARCHF2; the interaction leads to CFTR ubiqtuitination and degradation (By similarity). Interacts with ADGRG2 (By similarity).</text>
</comment>
<comment type="subcellular location">
    <subcellularLocation>
        <location evidence="2">Apical cell membrane</location>
        <topology evidence="1">Multi-pass membrane protein</topology>
    </subcellularLocation>
    <subcellularLocation>
        <location evidence="1">Early endosome membrane</location>
        <topology evidence="1">Multi-pass membrane protein</topology>
    </subcellularLocation>
    <subcellularLocation>
        <location evidence="2">Cell membrane</location>
        <topology evidence="1">Multi-pass membrane protein</topology>
    </subcellularLocation>
    <subcellularLocation>
        <location evidence="1">Recycling endosome membrane</location>
        <topology evidence="1">Multi-pass membrane protein</topology>
    </subcellularLocation>
    <subcellularLocation>
        <location evidence="1">Endoplasmic reticulum membrane</location>
        <topology evidence="1">Multi-pass membrane protein</topology>
    </subcellularLocation>
    <subcellularLocation>
        <location evidence="3">Nucleus</location>
    </subcellularLocation>
    <text evidence="1 3">The channel is internalized from the cell surface into an endosomal recycling compartment, from where it is recycled to the cell membrane. In the oviduct and bronchus, detected on the apical side of epithelial cells, but not associated with cilia. In Sertoli cells, a processed product is detected in the nucleus. ER stress induces GORASP2-mediated unconventional (ER/Golgi-independent) trafficking of core-glycosylated CFTR to cell membrane.</text>
</comment>
<comment type="domain">
    <text evidence="1 2">Binds and hydrolyzes ATP via the two cytoplasmic ABC transporter nucleotide-binding domains. The two ATP-binding domains interact with each other, forming a head-to-tail dimer. Normal ATPase activity requires interaction between the two domains. The first ABC transporter nucleotide-binding domain has no ATPase activity by itself.</text>
</comment>
<comment type="domain">
    <text evidence="1">The PDZ-binding motif mediates interactions with GOPC and with the SLC4A7, NHERF1/EBP50 complex.</text>
</comment>
<comment type="domain">
    <text evidence="1">The disordered R region mediates channel activation when it is phosphorylated, but not in the absence of phosphorylation.</text>
</comment>
<comment type="PTM">
    <text evidence="1">N-glycosylated.</text>
</comment>
<comment type="PTM">
    <text evidence="1">Phosphorylated; cAMP treatment promotes phosphorylation and activates the channel. Dephosphorylation decreases the ATPase activity (in vitro). Phosphorylation at PKA sites activates the channel. Phosphorylation at PKC sites enhances the response to phosphorylation by PKA. Phosphorylated by AMPK; this inhibits channel activity.</text>
</comment>
<comment type="PTM">
    <text evidence="1">Ubiquitinated, leading to its degradation in the lysosome. Deubiquitination by USP10 in early endosomes enhances its endocytic recycling to the cell membrane. Ubiquitinated by RNF185 during ER stress. Ubiquitinated by MARCHF2 (By similarity).</text>
</comment>
<comment type="similarity">
    <text evidence="8">Belongs to the ABC transporter superfamily. ABCC family. CFTR transporter (TC 3.A.1.202) subfamily.</text>
</comment>
<accession>Q07DX5</accession>